<proteinExistence type="evidence at protein level"/>
<accession>Q20471</accession>
<accession>A0A4V0IKI0</accession>
<accession>H9G2V4</accession>
<accession>H9G2V5</accession>
<accession>Q2PJ71</accession>
<accession>Q565A9</accession>
<accession>Q5MCN7</accession>
<accession>Q5MCN8</accession>
<accession>Q5WRP4</accession>
<accession>Q8I4I6</accession>
<name>KIN20_CAEEL</name>
<dbReference type="EC" id="2.7.11.1" evidence="10"/>
<dbReference type="EMBL" id="AY836556">
    <property type="protein sequence ID" value="AAW21314.1"/>
    <property type="molecule type" value="mRNA"/>
</dbReference>
<dbReference type="EMBL" id="AY836557">
    <property type="protein sequence ID" value="AAW21315.1"/>
    <property type="molecule type" value="mRNA"/>
</dbReference>
<dbReference type="EMBL" id="AY836558">
    <property type="protein sequence ID" value="AAW21316.1"/>
    <property type="molecule type" value="mRNA"/>
</dbReference>
<dbReference type="EMBL" id="BX284606">
    <property type="protein sequence ID" value="CAA93775.3"/>
    <property type="molecule type" value="Genomic_DNA"/>
</dbReference>
<dbReference type="EMBL" id="BX284606">
    <property type="protein sequence ID" value="CAD56585.4"/>
    <property type="molecule type" value="Genomic_DNA"/>
</dbReference>
<dbReference type="EMBL" id="Z81031">
    <property type="protein sequence ID" value="CAD56585.4"/>
    <property type="status" value="JOINED"/>
    <property type="molecule type" value="Genomic_DNA"/>
</dbReference>
<dbReference type="EMBL" id="BX284606">
    <property type="protein sequence ID" value="CAH60762.2"/>
    <property type="molecule type" value="Genomic_DNA"/>
</dbReference>
<dbReference type="EMBL" id="BX284606">
    <property type="protein sequence ID" value="CAI79241.1"/>
    <property type="molecule type" value="Genomic_DNA"/>
</dbReference>
<dbReference type="EMBL" id="BX284606">
    <property type="protein sequence ID" value="CCG28198.1"/>
    <property type="molecule type" value="Genomic_DNA"/>
</dbReference>
<dbReference type="EMBL" id="Z69903">
    <property type="protein sequence ID" value="CCG28199.1"/>
    <property type="molecule type" value="Genomic_DNA"/>
</dbReference>
<dbReference type="EMBL" id="BX284606">
    <property type="protein sequence ID" value="VTW47572.1"/>
    <property type="molecule type" value="Genomic_DNA"/>
</dbReference>
<dbReference type="PIR" id="T22311">
    <property type="entry name" value="T22311"/>
</dbReference>
<dbReference type="RefSeq" id="NP_001024669.1">
    <molecule id="Q20471-3"/>
    <property type="nucleotide sequence ID" value="NM_001029498.6"/>
</dbReference>
<dbReference type="RefSeq" id="NP_001024670.1">
    <property type="nucleotide sequence ID" value="NM_001029499.2"/>
</dbReference>
<dbReference type="RefSeq" id="NP_001257258.1">
    <property type="nucleotide sequence ID" value="NM_001270329.1"/>
</dbReference>
<dbReference type="RefSeq" id="NP_001257259.1">
    <property type="nucleotide sequence ID" value="NM_001270330.1"/>
</dbReference>
<dbReference type="RefSeq" id="NP_001359567.1">
    <molecule id="Q20471-1"/>
    <property type="nucleotide sequence ID" value="NM_001373594.3"/>
</dbReference>
<dbReference type="RefSeq" id="NP_001360748.1">
    <molecule id="Q20471-8"/>
    <property type="nucleotide sequence ID" value="NM_001373595.3"/>
</dbReference>
<dbReference type="RefSeq" id="NP_001362050.1">
    <molecule id="Q20471-2"/>
    <property type="nucleotide sequence ID" value="NM_001375178.1"/>
</dbReference>
<dbReference type="RefSeq" id="NP_001367127.1">
    <molecule id="Q20471-4"/>
    <property type="nucleotide sequence ID" value="NM_001381166.1"/>
</dbReference>
<dbReference type="RefSeq" id="NP_001370884.1">
    <molecule id="Q20471-6"/>
    <property type="nucleotide sequence ID" value="NM_001383681.1"/>
</dbReference>
<dbReference type="RefSeq" id="NP_510533.3">
    <property type="nucleotide sequence ID" value="NM_078132.4"/>
</dbReference>
<dbReference type="RefSeq" id="NP_872247.4">
    <molecule id="Q20471-5"/>
    <property type="nucleotide sequence ID" value="NM_182447.10"/>
</dbReference>
<dbReference type="SMR" id="Q20471"/>
<dbReference type="BioGRID" id="46517">
    <property type="interactions" value="11"/>
</dbReference>
<dbReference type="FunCoup" id="Q20471">
    <property type="interactions" value="3012"/>
</dbReference>
<dbReference type="IntAct" id="Q20471">
    <property type="interactions" value="5"/>
</dbReference>
<dbReference type="MINT" id="Q20471"/>
<dbReference type="STRING" id="6239.F46F2.2c.2"/>
<dbReference type="PaxDb" id="6239-F46F2.2c.1"/>
<dbReference type="EnsemblMetazoa" id="F46F2.2a.1">
    <molecule id="Q20471-1"/>
    <property type="protein sequence ID" value="F46F2.2a.1"/>
    <property type="gene ID" value="WBGene00002203"/>
</dbReference>
<dbReference type="EnsemblMetazoa" id="F46F2.2b.1">
    <molecule id="Q20471-5"/>
    <property type="protein sequence ID" value="F46F2.2b.1"/>
    <property type="gene ID" value="WBGene00002203"/>
</dbReference>
<dbReference type="EnsemblMetazoa" id="F46F2.2c.1">
    <molecule id="Q20471-3"/>
    <property type="protein sequence ID" value="F46F2.2c.1"/>
    <property type="gene ID" value="WBGene00002203"/>
</dbReference>
<dbReference type="EnsemblMetazoa" id="F46F2.2d.1">
    <molecule id="Q20471-4"/>
    <property type="protein sequence ID" value="F46F2.2d.1"/>
    <property type="gene ID" value="WBGene00002203"/>
</dbReference>
<dbReference type="EnsemblMetazoa" id="F46F2.2e.1">
    <molecule id="Q20471-2"/>
    <property type="protein sequence ID" value="F46F2.2e.1"/>
    <property type="gene ID" value="WBGene00002203"/>
</dbReference>
<dbReference type="EnsemblMetazoa" id="F46F2.2f.1">
    <molecule id="Q20471-6"/>
    <property type="protein sequence ID" value="F46F2.2f.1"/>
    <property type="gene ID" value="WBGene00002203"/>
</dbReference>
<dbReference type="EnsemblMetazoa" id="F46F2.2f.2">
    <molecule id="Q20471-6"/>
    <property type="protein sequence ID" value="F46F2.2f.2"/>
    <property type="gene ID" value="WBGene00002203"/>
</dbReference>
<dbReference type="EnsemblMetazoa" id="F46F2.2g.1">
    <molecule id="Q20471-8"/>
    <property type="protein sequence ID" value="F46F2.2g.1"/>
    <property type="gene ID" value="WBGene00002203"/>
</dbReference>
<dbReference type="GeneID" id="181620"/>
<dbReference type="KEGG" id="cel:CELE_F46F2.2"/>
<dbReference type="UCSC" id="F46F2.2a.1">
    <molecule id="Q20471-1"/>
    <property type="organism name" value="c. elegans"/>
</dbReference>
<dbReference type="AGR" id="WB:WBGene00002203"/>
<dbReference type="CTD" id="181620"/>
<dbReference type="WormBase" id="F46F2.2a">
    <molecule id="Q20471-1"/>
    <property type="protein sequence ID" value="CE38356"/>
    <property type="gene ID" value="WBGene00002203"/>
    <property type="gene designation" value="kin-20"/>
</dbReference>
<dbReference type="WormBase" id="F46F2.2b">
    <molecule id="Q20471-5"/>
    <property type="protein sequence ID" value="CE47149"/>
    <property type="gene ID" value="WBGene00002203"/>
    <property type="gene designation" value="kin-20"/>
</dbReference>
<dbReference type="WormBase" id="F46F2.2c">
    <molecule id="Q20471-3"/>
    <property type="protein sequence ID" value="CE38358"/>
    <property type="gene ID" value="WBGene00002203"/>
    <property type="gene designation" value="kin-20"/>
</dbReference>
<dbReference type="WormBase" id="F46F2.2d">
    <molecule id="Q20471-4"/>
    <property type="protein sequence ID" value="CE38359"/>
    <property type="gene ID" value="WBGene00002203"/>
    <property type="gene designation" value="kin-20"/>
</dbReference>
<dbReference type="WormBase" id="F46F2.2e">
    <molecule id="Q20471-2"/>
    <property type="protein sequence ID" value="CE38357"/>
    <property type="gene ID" value="WBGene00002203"/>
    <property type="gene designation" value="kin-20"/>
</dbReference>
<dbReference type="WormBase" id="F46F2.2f">
    <molecule id="Q20471-6"/>
    <property type="protein sequence ID" value="CE32422"/>
    <property type="gene ID" value="WBGene00002203"/>
    <property type="gene designation" value="kin-20"/>
</dbReference>
<dbReference type="WormBase" id="F46F2.2g">
    <molecule id="Q20471-8"/>
    <property type="protein sequence ID" value="CE53444"/>
    <property type="gene ID" value="WBGene00002203"/>
    <property type="gene designation" value="kin-20"/>
</dbReference>
<dbReference type="eggNOG" id="KOG1164">
    <property type="taxonomic scope" value="Eukaryota"/>
</dbReference>
<dbReference type="GeneTree" id="ENSGT00940000153536"/>
<dbReference type="HOGENOM" id="CLU_040585_0_0_1"/>
<dbReference type="InParanoid" id="Q20471"/>
<dbReference type="OMA" id="FNWPPID"/>
<dbReference type="OrthoDB" id="5800476at2759"/>
<dbReference type="PhylomeDB" id="Q20471"/>
<dbReference type="Reactome" id="R-CEL-201688">
    <property type="pathway name" value="WNT mediated activation of DVL"/>
</dbReference>
<dbReference type="SignaLink" id="Q20471"/>
<dbReference type="PRO" id="PR:Q20471"/>
<dbReference type="Proteomes" id="UP000001940">
    <property type="component" value="Chromosome X"/>
</dbReference>
<dbReference type="Bgee" id="WBGene00002203">
    <property type="expression patterns" value="Expressed in pharyngeal muscle cell (C elegans) and 3 other cell types or tissues"/>
</dbReference>
<dbReference type="ExpressionAtlas" id="Q20471">
    <property type="expression patterns" value="baseline and differential"/>
</dbReference>
<dbReference type="GO" id="GO:0005912">
    <property type="term" value="C:adherens junction"/>
    <property type="evidence" value="ECO:0000314"/>
    <property type="project" value="UniProtKB"/>
</dbReference>
<dbReference type="GO" id="GO:0000775">
    <property type="term" value="C:chromosome, centromeric region"/>
    <property type="evidence" value="ECO:0007669"/>
    <property type="project" value="UniProtKB-SubCell"/>
</dbReference>
<dbReference type="GO" id="GO:0005737">
    <property type="term" value="C:cytoplasm"/>
    <property type="evidence" value="ECO:0000318"/>
    <property type="project" value="GO_Central"/>
</dbReference>
<dbReference type="GO" id="GO:0005634">
    <property type="term" value="C:nucleus"/>
    <property type="evidence" value="ECO:0000314"/>
    <property type="project" value="UniProtKB"/>
</dbReference>
<dbReference type="GO" id="GO:0005524">
    <property type="term" value="F:ATP binding"/>
    <property type="evidence" value="ECO:0007669"/>
    <property type="project" value="UniProtKB-KW"/>
</dbReference>
<dbReference type="GO" id="GO:0106310">
    <property type="term" value="F:protein serine kinase activity"/>
    <property type="evidence" value="ECO:0007669"/>
    <property type="project" value="RHEA"/>
</dbReference>
<dbReference type="GO" id="GO:0004674">
    <property type="term" value="F:protein serine/threonine kinase activity"/>
    <property type="evidence" value="ECO:0000315"/>
    <property type="project" value="UniProtKB"/>
</dbReference>
<dbReference type="GO" id="GO:0006897">
    <property type="term" value="P:endocytosis"/>
    <property type="evidence" value="ECO:0000318"/>
    <property type="project" value="GO_Central"/>
</dbReference>
<dbReference type="GO" id="GO:0090263">
    <property type="term" value="P:positive regulation of canonical Wnt signaling pathway"/>
    <property type="evidence" value="ECO:0000318"/>
    <property type="project" value="GO_Central"/>
</dbReference>
<dbReference type="GO" id="GO:0032436">
    <property type="term" value="P:positive regulation of proteasomal ubiquitin-dependent protein catabolic process"/>
    <property type="evidence" value="ECO:0000318"/>
    <property type="project" value="GO_Central"/>
</dbReference>
<dbReference type="GO" id="GO:0048670">
    <property type="term" value="P:regulation of collateral sprouting"/>
    <property type="evidence" value="ECO:0000315"/>
    <property type="project" value="UniProtKB"/>
</dbReference>
<dbReference type="GO" id="GO:0040012">
    <property type="term" value="P:regulation of locomotion"/>
    <property type="evidence" value="ECO:0000315"/>
    <property type="project" value="UniProtKB"/>
</dbReference>
<dbReference type="GO" id="GO:0048511">
    <property type="term" value="P:rhythmic process"/>
    <property type="evidence" value="ECO:0007669"/>
    <property type="project" value="UniProtKB-KW"/>
</dbReference>
<dbReference type="GO" id="GO:0007165">
    <property type="term" value="P:signal transduction"/>
    <property type="evidence" value="ECO:0000318"/>
    <property type="project" value="GO_Central"/>
</dbReference>
<dbReference type="CDD" id="cd14125">
    <property type="entry name" value="STKc_CK1_delta_epsilon"/>
    <property type="match status" value="1"/>
</dbReference>
<dbReference type="FunFam" id="1.10.510.10:FF:001039">
    <property type="entry name" value="Casein kinase I isoform delta"/>
    <property type="match status" value="1"/>
</dbReference>
<dbReference type="FunFam" id="3.30.200.20:FF:000538">
    <property type="entry name" value="Putative Casein kinase I"/>
    <property type="match status" value="1"/>
</dbReference>
<dbReference type="Gene3D" id="1.10.510.10">
    <property type="entry name" value="Transferase(Phosphotransferase) domain 1"/>
    <property type="match status" value="1"/>
</dbReference>
<dbReference type="InterPro" id="IPR050235">
    <property type="entry name" value="CK1_Ser-Thr_kinase"/>
</dbReference>
<dbReference type="InterPro" id="IPR011009">
    <property type="entry name" value="Kinase-like_dom_sf"/>
</dbReference>
<dbReference type="InterPro" id="IPR000719">
    <property type="entry name" value="Prot_kinase_dom"/>
</dbReference>
<dbReference type="InterPro" id="IPR017441">
    <property type="entry name" value="Protein_kinase_ATP_BS"/>
</dbReference>
<dbReference type="InterPro" id="IPR008271">
    <property type="entry name" value="Ser/Thr_kinase_AS"/>
</dbReference>
<dbReference type="PANTHER" id="PTHR11909">
    <property type="entry name" value="CASEIN KINASE-RELATED"/>
    <property type="match status" value="1"/>
</dbReference>
<dbReference type="Pfam" id="PF00069">
    <property type="entry name" value="Pkinase"/>
    <property type="match status" value="1"/>
</dbReference>
<dbReference type="SMART" id="SM00220">
    <property type="entry name" value="S_TKc"/>
    <property type="match status" value="1"/>
</dbReference>
<dbReference type="SUPFAM" id="SSF56112">
    <property type="entry name" value="Protein kinase-like (PK-like)"/>
    <property type="match status" value="1"/>
</dbReference>
<dbReference type="PROSITE" id="PS00107">
    <property type="entry name" value="PROTEIN_KINASE_ATP"/>
    <property type="match status" value="1"/>
</dbReference>
<dbReference type="PROSITE" id="PS50011">
    <property type="entry name" value="PROTEIN_KINASE_DOM"/>
    <property type="match status" value="1"/>
</dbReference>
<dbReference type="PROSITE" id="PS00108">
    <property type="entry name" value="PROTEIN_KINASE_ST"/>
    <property type="match status" value="1"/>
</dbReference>
<protein>
    <recommendedName>
        <fullName>Casein kinase I isoform delta</fullName>
        <ecNumber evidence="10">2.7.11.1</ecNumber>
    </recommendedName>
    <alternativeName>
        <fullName>Protein kinase 20</fullName>
    </alternativeName>
</protein>
<feature type="chain" id="PRO_0000192866" description="Casein kinase I isoform delta">
    <location>
        <begin position="1"/>
        <end position="497"/>
    </location>
</feature>
<feature type="domain" description="Protein kinase" evidence="2">
    <location>
        <begin position="191"/>
        <end position="458"/>
    </location>
</feature>
<feature type="region of interest" description="Disordered" evidence="4">
    <location>
        <begin position="1"/>
        <end position="58"/>
    </location>
</feature>
<feature type="region of interest" description="Disordered" evidence="4">
    <location>
        <begin position="86"/>
        <end position="109"/>
    </location>
</feature>
<feature type="compositionally biased region" description="Polar residues" evidence="4">
    <location>
        <begin position="14"/>
        <end position="34"/>
    </location>
</feature>
<feature type="compositionally biased region" description="Low complexity" evidence="4">
    <location>
        <begin position="88"/>
        <end position="105"/>
    </location>
</feature>
<feature type="active site" description="Proton acceptor" evidence="2 3">
    <location>
        <position position="310"/>
    </location>
</feature>
<feature type="binding site" evidence="2">
    <location>
        <begin position="197"/>
        <end position="205"/>
    </location>
    <ligand>
        <name>ATP</name>
        <dbReference type="ChEBI" id="CHEBI:30616"/>
    </ligand>
</feature>
<feature type="binding site" evidence="2">
    <location>
        <position position="220"/>
    </location>
    <ligand>
        <name>ATP</name>
        <dbReference type="ChEBI" id="CHEBI:30616"/>
    </ligand>
</feature>
<feature type="splice variant" id="VSP_007173" description="In isoform b, isoform e and isoform f." evidence="9">
    <location>
        <begin position="1"/>
        <end position="182"/>
    </location>
</feature>
<feature type="splice variant" id="VSP_060794" description="In isoform g." evidence="9">
    <original>MATMSNDAAAAATWHNNTSTPMDTTEPATNSHNPGETAVIGGPEALLLPSGSGPEEMNRHPLLMAQAHGEHHQPRLLHNFPVIPPPIQQHQQPPLLQQAQPSQIPHPTQPQIDPTMFTQQSGFNWPPIDPNTIAALAQAQLASSHAQFVSLALTLDPTLLSHFLATQQIPPVPQPLVHKKA</original>
    <variation>MLFVPGKGLS</variation>
    <location>
        <begin position="1"/>
        <end position="181"/>
    </location>
</feature>
<feature type="splice variant" id="VSP_016943" description="In isoform d." evidence="9">
    <original>YNESLEARNNFQQAVPNQRRH</original>
    <variation>DLPF</variation>
    <location>
        <begin position="477"/>
        <end position="497"/>
    </location>
</feature>
<feature type="splice variant" id="VSP_060795" description="In isoform f and isoform g." evidence="9">
    <original>YNES</original>
    <variation>DLPF</variation>
    <location>
        <begin position="477"/>
        <end position="480"/>
    </location>
</feature>
<feature type="splice variant" id="VSP_060796" description="In isoform a and isoform e." evidence="9">
    <original>YNE</original>
    <variation>RRN</variation>
    <location>
        <begin position="477"/>
        <end position="479"/>
    </location>
</feature>
<feature type="splice variant" id="VSP_060797" description="In isoform a and isoform e." evidence="9">
    <location>
        <begin position="480"/>
        <end position="497"/>
    </location>
</feature>
<feature type="splice variant" id="VSP_060798" description="In isoform f and isoform g." evidence="9">
    <location>
        <begin position="481"/>
        <end position="497"/>
    </location>
</feature>
<feature type="mutagenesis site" description="In ox423; egg-laying defects, dumpy and uncoordinated phenotypes, and progressive paralysis. Highly disorganized nervous system due to axon sprouting defects in late larval stage and adult animals whereby VD and DD motor neurons exhibit extra commissures, misrouted or branched axons, persistent growth cones, and spindly axons. Axon defects accumulate with age. No defects in axon guidance or synapse formation, but there is failure to repress the emergence of new growth cones after they have reached their target. Regeneration of cut axons at the L4 larval stage is improved compared to wild-type. Reduces expression of the long isoform of unc-44 in embryos. Locomotion defects are restored in a ssup-72 mutant background." evidence="7">
    <location>
        <begin position="344"/>
        <end position="497"/>
    </location>
</feature>
<reference key="1">
    <citation type="journal article" date="2005" name="Dev. Cell">
        <title>Developmental timing in C. elegans is regulated by kin-20 and tim-1, homologs of core circadian clock genes.</title>
        <authorList>
            <person name="Banerjee D."/>
            <person name="Kwok A."/>
            <person name="Lin S.-Y."/>
            <person name="Slack F.J."/>
        </authorList>
    </citation>
    <scope>NUCLEOTIDE SEQUENCE [MRNA] (ISOFORMS A AND E)</scope>
    <scope>FUNCTION</scope>
    <scope>TISSUE SPECIFICITY</scope>
    <scope>DEVELOPMENTAL STAGE</scope>
    <scope>DISRUPTION PHENOTYPE</scope>
</reference>
<reference key="2">
    <citation type="journal article" date="1998" name="Science">
        <title>Genome sequence of the nematode C. elegans: a platform for investigating biology.</title>
        <authorList>
            <consortium name="The C. elegans sequencing consortium"/>
        </authorList>
    </citation>
    <scope>NUCLEOTIDE SEQUENCE [LARGE SCALE GENOMIC DNA]</scope>
    <source>
        <strain>Bristol N2</strain>
    </source>
</reference>
<reference key="3">
    <citation type="journal article" date="2018" name="G3 (Bethesda)">
        <title>The Doubletime Homolog KIN-20 Mainly Regulates let-7 Independently of Its Effects on the Period Homolog LIN-42 in Caenorhabditis elegans.</title>
        <authorList>
            <person name="Rhodehouse K."/>
            <person name="Cascino K."/>
            <person name="Aseltine L."/>
            <person name="Padula A."/>
            <person name="Weinstein R."/>
            <person name="Spina J.S."/>
            <person name="Olivero C.E."/>
            <person name="Van Wynsberghe P.M."/>
        </authorList>
    </citation>
    <scope>FUNCTION</scope>
    <scope>DEVELOPMENTAL STAGE</scope>
    <scope>DISRUPTION PHENOTYPE</scope>
</reference>
<reference key="4">
    <citation type="journal article" date="2020" name="Dev. Cell">
        <title>Casein Kinase 1delta Stabilizes Mature Axons by Inhibiting Transcription Termination of Ankyrin.</title>
        <authorList>
            <person name="LaBella M.L."/>
            <person name="Hujber E.J."/>
            <person name="Moore K.A."/>
            <person name="Rawson R.L."/>
            <person name="Merrill S.A."/>
            <person name="Allaire P.D."/>
            <person name="Ailion M."/>
            <person name="Hollien J."/>
            <person name="Bastiani M.J."/>
            <person name="Jorgensen E.M."/>
        </authorList>
    </citation>
    <scope>FUNCTION</scope>
    <scope>CATALYTIC ACTIVITY</scope>
    <scope>SUBCELLULAR LOCATION</scope>
    <scope>DEVELOPMENTAL STAGE</scope>
    <scope>MUTAGENESIS OF 344-GLN--HIS-497</scope>
</reference>
<comment type="function">
    <text evidence="1 5 6 7 10">Essential serine/threonine-protein kinase that regulates diverse cellular growth and survival processes including Wnt signaling, DNA repair and circadian rhythms (By similarity). Casein kinases are operationally defined by their preferential utilization of acidic proteins (By similarity). Positively regulates the expression of components of the heterochronic pathway, which regulate developmental timing, such as the transcriptional repressor lin-42 and microRNAs such as let-7 (PubMed:29880558). Negatively regulates cell cycle exit and cell fusion to prevent the premature differentiation of hypodermal seam cells into adult cells (PubMed:15691769). Plays a role in regulating axon branching and subsequently, the maturation of the nervous system, most likely by preventing the premature termination of transcripts for proteins such as Ankyrin/unc-44, which are required for maintaining the nervous system (PubMed:31910362). May phosphorylate ssup-72 to promote nervous system maturation (Probable).</text>
</comment>
<comment type="catalytic activity">
    <reaction evidence="10">
        <text>L-seryl-[protein] + ATP = O-phospho-L-seryl-[protein] + ADP + H(+)</text>
        <dbReference type="Rhea" id="RHEA:17989"/>
        <dbReference type="Rhea" id="RHEA-COMP:9863"/>
        <dbReference type="Rhea" id="RHEA-COMP:11604"/>
        <dbReference type="ChEBI" id="CHEBI:15378"/>
        <dbReference type="ChEBI" id="CHEBI:29999"/>
        <dbReference type="ChEBI" id="CHEBI:30616"/>
        <dbReference type="ChEBI" id="CHEBI:83421"/>
        <dbReference type="ChEBI" id="CHEBI:456216"/>
        <dbReference type="EC" id="2.7.11.1"/>
    </reaction>
</comment>
<comment type="catalytic activity">
    <reaction evidence="10">
        <text>L-threonyl-[protein] + ATP = O-phospho-L-threonyl-[protein] + ADP + H(+)</text>
        <dbReference type="Rhea" id="RHEA:46608"/>
        <dbReference type="Rhea" id="RHEA-COMP:11060"/>
        <dbReference type="Rhea" id="RHEA-COMP:11605"/>
        <dbReference type="ChEBI" id="CHEBI:15378"/>
        <dbReference type="ChEBI" id="CHEBI:30013"/>
        <dbReference type="ChEBI" id="CHEBI:30616"/>
        <dbReference type="ChEBI" id="CHEBI:61977"/>
        <dbReference type="ChEBI" id="CHEBI:456216"/>
        <dbReference type="EC" id="2.7.11.1"/>
    </reaction>
</comment>
<comment type="activity regulation">
    <text evidence="1">Exhibits substrate-dependent heparin activation.</text>
</comment>
<comment type="subunit">
    <text evidence="1">Monomer.</text>
</comment>
<comment type="subcellular location">
    <subcellularLocation>
        <location evidence="1">Cytoplasm</location>
    </subcellularLocation>
    <subcellularLocation>
        <location evidence="7">Nucleus</location>
    </subcellularLocation>
    <subcellularLocation>
        <location evidence="1">Chromosome</location>
        <location evidence="1">Centromere</location>
    </subcellularLocation>
    <subcellularLocation>
        <location evidence="7">Cell junction</location>
        <location evidence="7">Adherens junction</location>
    </subcellularLocation>
    <text evidence="7">Localizes to the nucleus of all cell types and to adherens junctions in the spermatheca.</text>
</comment>
<comment type="alternative products">
    <event type="alternative splicing"/>
    <isoform>
        <id>Q20471-3</id>
        <name evidence="13">c</name>
        <sequence type="displayed"/>
    </isoform>
    <isoform>
        <id>Q20471-1</id>
        <name evidence="11">a</name>
        <name evidence="8">kin-20A</name>
        <name evidence="8">kin-20C</name>
        <sequence type="described" ref="VSP_060796 VSP_060797"/>
    </isoform>
    <isoform>
        <id>Q20471-5</id>
        <name evidence="12">b</name>
        <sequence type="described" ref="VSP_007173"/>
    </isoform>
    <isoform>
        <id>Q20471-4</id>
        <name evidence="14">d</name>
        <sequence type="described" ref="VSP_016943"/>
    </isoform>
    <isoform>
        <id>Q20471-2</id>
        <name evidence="15">e</name>
        <name evidence="8">kin-20B</name>
        <sequence type="described" ref="VSP_007173 VSP_060796 VSP_060797"/>
    </isoform>
    <isoform>
        <id>Q20471-6</id>
        <name evidence="16">f</name>
        <sequence type="described" ref="VSP_007173 VSP_060795 VSP_060798"/>
    </isoform>
    <isoform>
        <id>Q20471-8</id>
        <name evidence="17">g</name>
        <sequence type="described" ref="VSP_060794 VSP_060795 VSP_060798"/>
    </isoform>
</comment>
<comment type="tissue specificity">
    <text evidence="5">Expressed throughout larval development and into the adult stage in both hypodermal seam cells and the hermaphrodite specific neuron.</text>
</comment>
<comment type="developmental stage">
    <text evidence="5 6 7">Constant expression throughout development (PubMed:15691769, PubMed:29880558). However, expression decreases prior to the L2 larval stage, increases at the beginning of the L3 larval stage, and then decreases and plateaus from the mid L3 larval stage onwards (PubMed:29880558, PubMed:31910362). In the nervous system, expressed as dim speckles in developing DD motor neurons from the 3-fold stage of embryogenesis, then expression is dim in neurons of L1 stage larvae (PubMed:31910362). At the L2 larval stage, it is highly expressed in epidermal cells and motor neurons (PubMed:31910362). At the L4 laravl stage, it is expressed in all cell types and in the spermatheca (PubMed:31910362).</text>
</comment>
<comment type="developmental stage">
    <molecule>Isoform a</molecule>
    <text evidence="6">Expressed throughout development.</text>
</comment>
<comment type="developmental stage">
    <molecule>Isoform b</molecule>
    <text evidence="6">Highly expressed throughout development.</text>
</comment>
<comment type="developmental stage">
    <molecule>Isoform c</molecule>
    <text evidence="6">Highly expressed throughout development.</text>
</comment>
<comment type="developmental stage">
    <molecule>Isoform d</molecule>
    <text evidence="6">Weakly expressed throughout development.</text>
</comment>
<comment type="developmental stage">
    <molecule>Isoform e</molecule>
    <text evidence="6">Expressed throughout development.</text>
</comment>
<comment type="developmental stage">
    <molecule>Isoform f</molecule>
    <text evidence="6">Weakly expressed throughout development.</text>
</comment>
<comment type="disruption phenotype">
    <text evidence="5 6">RNAi-mediated knockdown results in precocious seam cell fusion and the early exit of seam cell from the cell cycle during the L4 larval stage (PubMed:15691769). RNAi-mediated knockdown does not impair alae formation (PubMed:15691769). RNAi-mediated knockdown results in a squat body statue, referred to as a dumpy phenotype, and rescues the incomplete alae formation defect in the lin-42 (n1089) mutant (PubMed:29880558). RNAi-mediated knockdown increases the survival rate and partially restores alae formation of let-7 n2853 mutants at 20 dgrees Celsius (PubMed:15691769). RNAi-mediated knockdown rescues the lethal bursting phenotype that occurs after the L4 stage molt in the let-7(n2853) mutant at 25 degrees Celsius (PubMed:29880558).</text>
</comment>
<comment type="similarity">
    <text evidence="9">Belongs to the protein kinase superfamily. CK1 Ser/Thr protein kinase family. Casein kinase I subfamily.</text>
</comment>
<gene>
    <name evidence="13" type="primary">kin-20</name>
    <name evidence="13" type="ORF">F46F2.2</name>
</gene>
<evidence type="ECO:0000250" key="1">
    <source>
        <dbReference type="UniProtKB" id="P48730"/>
    </source>
</evidence>
<evidence type="ECO:0000255" key="2">
    <source>
        <dbReference type="PROSITE-ProRule" id="PRU00159"/>
    </source>
</evidence>
<evidence type="ECO:0000255" key="3">
    <source>
        <dbReference type="PROSITE-ProRule" id="PRU10027"/>
    </source>
</evidence>
<evidence type="ECO:0000256" key="4">
    <source>
        <dbReference type="SAM" id="MobiDB-lite"/>
    </source>
</evidence>
<evidence type="ECO:0000269" key="5">
    <source>
    </source>
</evidence>
<evidence type="ECO:0000269" key="6">
    <source>
    </source>
</evidence>
<evidence type="ECO:0000269" key="7">
    <source>
    </source>
</evidence>
<evidence type="ECO:0000303" key="8">
    <source>
    </source>
</evidence>
<evidence type="ECO:0000305" key="9"/>
<evidence type="ECO:0000305" key="10">
    <source>
    </source>
</evidence>
<evidence type="ECO:0000312" key="11">
    <source>
        <dbReference type="WormBase" id="F46F2.2a"/>
    </source>
</evidence>
<evidence type="ECO:0000312" key="12">
    <source>
        <dbReference type="WormBase" id="F46F2.2b"/>
    </source>
</evidence>
<evidence type="ECO:0000312" key="13">
    <source>
        <dbReference type="WormBase" id="F46F2.2c"/>
    </source>
</evidence>
<evidence type="ECO:0000312" key="14">
    <source>
        <dbReference type="WormBase" id="F46F2.2d"/>
    </source>
</evidence>
<evidence type="ECO:0000312" key="15">
    <source>
        <dbReference type="WormBase" id="F46F2.2e"/>
    </source>
</evidence>
<evidence type="ECO:0000312" key="16">
    <source>
        <dbReference type="WormBase" id="F46F2.2f"/>
    </source>
</evidence>
<evidence type="ECO:0000312" key="17">
    <source>
        <dbReference type="WormBase" id="F46F2.2g"/>
    </source>
</evidence>
<organism>
    <name type="scientific">Caenorhabditis elegans</name>
    <dbReference type="NCBI Taxonomy" id="6239"/>
    <lineage>
        <taxon>Eukaryota</taxon>
        <taxon>Metazoa</taxon>
        <taxon>Ecdysozoa</taxon>
        <taxon>Nematoda</taxon>
        <taxon>Chromadorea</taxon>
        <taxon>Rhabditida</taxon>
        <taxon>Rhabditina</taxon>
        <taxon>Rhabditomorpha</taxon>
        <taxon>Rhabditoidea</taxon>
        <taxon>Rhabditidae</taxon>
        <taxon>Peloderinae</taxon>
        <taxon>Caenorhabditis</taxon>
    </lineage>
</organism>
<sequence length="497" mass="56809">MATMSNDAAAAATWHNNTSTPMDTTEPATNSHNPGETAVIGGPEALLLPSGSGPEEMNRHPLLMAQAHGEHHQPRLLHNFPVIPPPIQQHQQPPLLQQAQPSQIPHPTQPQIDPTMFTQQSGFNWPPIDPNTIAALAQAQLASSHAQFVSLALTLDPTLLSHFLATQQIPPVPQPLVHKKAEMELRVGNRFRLGRKIGSGSFGDIYLGQNIQTNEEVAVKLECVKSKHPQLHIESRLYRIMLGGIGIPEIRWCGQEGDYNVMVMELLGPSLEDLFNFCQRKFSLKTVLLLADQMLSRVEFIHCRDYIHRDIKPDNFLMGLGKRGNLVYIIDFGLAKRYRDSKHQHIAYRENKNLTGTARYASINTHRGIEQSRRDDIESLGYVFMYFNRGTLPWQGLKAVTKRQKYELISEKKISTRVDDLCAGYPEAFAQYLNYCRSLGFEEQPDYGYLRNLFRTLFHRQQFCYDYVFDWNTYKFYNESLEARNNFQQAVPNQRRH</sequence>
<keyword id="KW-0025">Alternative splicing</keyword>
<keyword id="KW-0067">ATP-binding</keyword>
<keyword id="KW-0090">Biological rhythms</keyword>
<keyword id="KW-0965">Cell junction</keyword>
<keyword id="KW-0137">Centromere</keyword>
<keyword id="KW-0158">Chromosome</keyword>
<keyword id="KW-0963">Cytoplasm</keyword>
<keyword id="KW-0217">Developmental protein</keyword>
<keyword id="KW-0418">Kinase</keyword>
<keyword id="KW-0547">Nucleotide-binding</keyword>
<keyword id="KW-0539">Nucleus</keyword>
<keyword id="KW-0597">Phosphoprotein</keyword>
<keyword id="KW-1185">Reference proteome</keyword>
<keyword id="KW-0723">Serine/threonine-protein kinase</keyword>
<keyword id="KW-0808">Transferase</keyword>